<dbReference type="EMBL" id="CR857279">
    <property type="protein sequence ID" value="CAH89575.1"/>
    <property type="molecule type" value="mRNA"/>
</dbReference>
<dbReference type="EMBL" id="CR861351">
    <property type="protein sequence ID" value="CAH93412.1"/>
    <property type="molecule type" value="mRNA"/>
</dbReference>
<dbReference type="EMBL" id="AM048759">
    <property type="protein sequence ID" value="CAJ15168.1"/>
    <property type="status" value="ALT_FRAME"/>
    <property type="molecule type" value="mRNA"/>
</dbReference>
<dbReference type="KEGG" id="pon:100294570"/>
<dbReference type="GO" id="GO:0005741">
    <property type="term" value="C:mitochondrial outer membrane"/>
    <property type="evidence" value="ECO:0000250"/>
    <property type="project" value="UniProtKB"/>
</dbReference>
<dbReference type="GO" id="GO:0048311">
    <property type="term" value="P:mitochondrion distribution"/>
    <property type="evidence" value="ECO:0000250"/>
    <property type="project" value="UniProtKB"/>
</dbReference>
<dbReference type="GO" id="GO:0007005">
    <property type="term" value="P:mitochondrion organization"/>
    <property type="evidence" value="ECO:0000250"/>
    <property type="project" value="UniProtKB"/>
</dbReference>
<dbReference type="CDD" id="cd06060">
    <property type="entry name" value="misato"/>
    <property type="match status" value="1"/>
</dbReference>
<dbReference type="Gene3D" id="3.40.50.1440">
    <property type="entry name" value="Tubulin/FtsZ, GTPase domain"/>
    <property type="match status" value="1"/>
</dbReference>
<dbReference type="InterPro" id="IPR049942">
    <property type="entry name" value="DML1/Misato"/>
</dbReference>
<dbReference type="InterPro" id="IPR029209">
    <property type="entry name" value="DML1/Misato_tubulin"/>
</dbReference>
<dbReference type="InterPro" id="IPR019605">
    <property type="entry name" value="Misato_II_tubulin-like"/>
</dbReference>
<dbReference type="InterPro" id="IPR036525">
    <property type="entry name" value="Tubulin/FtsZ_GTPase_sf"/>
</dbReference>
<dbReference type="PANTHER" id="PTHR13391">
    <property type="entry name" value="MITOCHONDRIAL DISTRIBUTION REGULATOR MISATO"/>
    <property type="match status" value="1"/>
</dbReference>
<dbReference type="PANTHER" id="PTHR13391:SF0">
    <property type="entry name" value="PROTEIN MISATO HOMOLOG 1"/>
    <property type="match status" value="1"/>
</dbReference>
<dbReference type="Pfam" id="PF10644">
    <property type="entry name" value="Misat_Tub_SegII"/>
    <property type="match status" value="1"/>
</dbReference>
<dbReference type="Pfam" id="PF14881">
    <property type="entry name" value="Tubulin_3"/>
    <property type="match status" value="1"/>
</dbReference>
<dbReference type="SUPFAM" id="SSF52490">
    <property type="entry name" value="Tubulin nucleotide-binding domain-like"/>
    <property type="match status" value="1"/>
</dbReference>
<keyword id="KW-0963">Cytoplasm</keyword>
<keyword id="KW-0472">Membrane</keyword>
<keyword id="KW-0496">Mitochondrion</keyword>
<keyword id="KW-1000">Mitochondrion outer membrane</keyword>
<keyword id="KW-0597">Phosphoprotein</keyword>
<proteinExistence type="evidence at transcript level"/>
<feature type="chain" id="PRO_0000304629" description="Protein misato homolog 1">
    <location>
        <begin position="1"/>
        <end position="570"/>
    </location>
</feature>
<feature type="modified residue" description="Phosphoserine" evidence="1">
    <location>
        <position position="495"/>
    </location>
</feature>
<feature type="sequence conflict" description="In Ref. 1; CAH93412." evidence="2" ref="1">
    <original>K</original>
    <variation>E</variation>
    <location>
        <position position="73"/>
    </location>
</feature>
<feature type="sequence conflict" description="In Ref. 1; CAH93412." evidence="2" ref="1">
    <original>E</original>
    <variation>G</variation>
    <location>
        <position position="210"/>
    </location>
</feature>
<feature type="sequence conflict" description="In Ref. 2; CAJ15168." evidence="2" ref="2">
    <original>A</original>
    <variation>V</variation>
    <location>
        <position position="334"/>
    </location>
</feature>
<feature type="sequence conflict" description="In Ref. 1; CAH93412." evidence="2" ref="1">
    <original>S</original>
    <variation>P</variation>
    <location>
        <position position="348"/>
    </location>
</feature>
<feature type="sequence conflict" description="In Ref. 2; CAJ15168." evidence="2" ref="2">
    <original>V</original>
    <variation>A</variation>
    <location>
        <position position="461"/>
    </location>
</feature>
<feature type="sequence conflict" description="In Ref. 1; CAH93412." evidence="2" ref="1">
    <original>S</original>
    <variation>F</variation>
    <location>
        <position position="495"/>
    </location>
</feature>
<feature type="sequence conflict" description="In Ref. 1; CAH93412." evidence="2" ref="1">
    <original>I</original>
    <variation>V</variation>
    <location>
        <position position="548"/>
    </location>
</feature>
<gene>
    <name type="primary">MSTO1</name>
</gene>
<name>MSTO1_PONPY</name>
<sequence length="570" mass="61912">MAGGAREVLTLQLGHFAGFVGAHWWNQQDAALGQATDSKEPLGELCPDVLYRTGRTLHGQETYTPRLILMDLKGSLSSLKEEGGLYRDKQLDAAIAWQGKLTTHKEELYPKNPYLQDFLSAEGVLSSDGVWRVKSIPNGKGSPPLTTATTPKPLIPTEASIRVWSDFLRVHLHPRSICMIQKYNHDGEAGRLEAFGQGESVLKEPKYQEELEDRLHFYVEECDYLQGFQILCDLHDGFSGVGAKAAELLQDEYSGRGIITWGLLPGPYHRGEAQRNIYRLLNTAFGLVHLTAHSSLVCPLSLGGSLGLRPEPPVNFPYLHYDATLPFHCSAILATALDTVTVPYRLCSSPVSMVHLADMLSFCGKKVVTAGAIIPFPLAPGQSLPDSLMQFGGATPWTPLSACGEPSGTRCFAQSVVLRGIDRACHTSQLTPGTPPPSALHACTTGEEVLAQYLQQQQPGVMSSSRLLLTPCRVAPPYPHLFSSCGPPGMVLDGSPKGAAVESIPVFGALCSSSSLHQTLEALARDLTKLDLRRWASFMDAGVEHDDIAELLQELQSLAQCYQDGDSLVD</sequence>
<organism>
    <name type="scientific">Pongo pygmaeus</name>
    <name type="common">Bornean orangutan</name>
    <dbReference type="NCBI Taxonomy" id="9600"/>
    <lineage>
        <taxon>Eukaryota</taxon>
        <taxon>Metazoa</taxon>
        <taxon>Chordata</taxon>
        <taxon>Craniata</taxon>
        <taxon>Vertebrata</taxon>
        <taxon>Euteleostomi</taxon>
        <taxon>Mammalia</taxon>
        <taxon>Eutheria</taxon>
        <taxon>Euarchontoglires</taxon>
        <taxon>Primates</taxon>
        <taxon>Haplorrhini</taxon>
        <taxon>Catarrhini</taxon>
        <taxon>Hominidae</taxon>
        <taxon>Pongo</taxon>
    </lineage>
</organism>
<evidence type="ECO:0000250" key="1">
    <source>
        <dbReference type="UniProtKB" id="Q9BUK6"/>
    </source>
</evidence>
<evidence type="ECO:0000305" key="2"/>
<accession>Q5RF82</accession>
<accession>Q4GXY6</accession>
<accession>Q5R4A4</accession>
<comment type="function">
    <text evidence="1">Involved in the regulation of mitochondrial distribution and morphology. Required for mitochondrial fusion and mitochondrial network formation.</text>
</comment>
<comment type="subcellular location">
    <subcellularLocation>
        <location evidence="1">Mitochondrion outer membrane</location>
    </subcellularLocation>
    <subcellularLocation>
        <location evidence="1">Cytoplasm</location>
    </subcellularLocation>
</comment>
<comment type="similarity">
    <text evidence="2">Belongs to the misato family.</text>
</comment>
<comment type="sequence caution" evidence="2">
    <conflict type="frameshift">
        <sequence resource="EMBL-CDS" id="CAJ15168"/>
    </conflict>
</comment>
<reference key="1">
    <citation type="submission" date="2004-11" db="EMBL/GenBank/DDBJ databases">
        <authorList>
            <consortium name="The German cDNA consortium"/>
        </authorList>
    </citation>
    <scope>NUCLEOTIDE SEQUENCE [LARGE SCALE MRNA]</scope>
    <source>
        <tissue>Brain cortex</tissue>
        <tissue>Kidney</tissue>
    </source>
</reference>
<reference key="2">
    <citation type="journal article" date="2006" name="Genomics">
        <title>An anthropoid-specific segmental duplication on human chromosome 1q22.</title>
        <authorList>
            <person name="Kuryshev V.Y."/>
            <person name="Vorobyov E."/>
            <person name="Zink D."/>
            <person name="Schmitz J."/>
            <person name="Rozhdestvensky T.S."/>
            <person name="Muenstermann E."/>
            <person name="Ernst U."/>
            <person name="Wellenreuther R."/>
            <person name="Moosmayer P."/>
            <person name="Bechtel S."/>
            <person name="Schupp I."/>
            <person name="Horst J."/>
            <person name="Korn B."/>
            <person name="Poustka A."/>
            <person name="Wiemann S."/>
        </authorList>
    </citation>
    <scope>NUCLEOTIDE SEQUENCE [MRNA] OF 4-570</scope>
</reference>
<protein>
    <recommendedName>
        <fullName>Protein misato homolog 1</fullName>
    </recommendedName>
</protein>